<accession>Q2YKZ9</accession>
<keyword id="KW-0574">Periplasm</keyword>
<keyword id="KW-1185">Reference proteome</keyword>
<keyword id="KW-0732">Signal</keyword>
<keyword id="KW-0813">Transport</keyword>
<gene>
    <name type="ordered locus">BAB2_0491</name>
</gene>
<name>Y2991_BRUA2</name>
<evidence type="ECO:0000255" key="1"/>
<evidence type="ECO:0000305" key="2"/>
<comment type="function">
    <text>Probably part of an ABC transporter complex.</text>
</comment>
<comment type="subunit">
    <text evidence="2">The complex is composed of two ATP-binding proteins (BAB2_0493), two transmembrane proteins (BAB2_0490) and a solute-binding protein (BAB2_0491).</text>
</comment>
<comment type="subcellular location">
    <subcellularLocation>
        <location evidence="2">Periplasm</location>
    </subcellularLocation>
</comment>
<comment type="similarity">
    <text evidence="2">Belongs to the bacterial solute-binding protein 1 family.</text>
</comment>
<protein>
    <recommendedName>
        <fullName>Putative binding protein BAB2_0491</fullName>
    </recommendedName>
</protein>
<organism>
    <name type="scientific">Brucella abortus (strain 2308)</name>
    <dbReference type="NCBI Taxonomy" id="359391"/>
    <lineage>
        <taxon>Bacteria</taxon>
        <taxon>Pseudomonadati</taxon>
        <taxon>Pseudomonadota</taxon>
        <taxon>Alphaproteobacteria</taxon>
        <taxon>Hyphomicrobiales</taxon>
        <taxon>Brucellaceae</taxon>
        <taxon>Brucella/Ochrobactrum group</taxon>
        <taxon>Brucella</taxon>
    </lineage>
</organism>
<reference key="1">
    <citation type="journal article" date="2005" name="Infect. Immun.">
        <title>Whole-genome analyses of speciation events in pathogenic Brucellae.</title>
        <authorList>
            <person name="Chain P.S."/>
            <person name="Comerci D.J."/>
            <person name="Tolmasky M.E."/>
            <person name="Larimer F.W."/>
            <person name="Malfatti S.A."/>
            <person name="Vergez L.M."/>
            <person name="Aguero F."/>
            <person name="Land M.L."/>
            <person name="Ugalde R.A."/>
            <person name="Garcia E."/>
        </authorList>
    </citation>
    <scope>NUCLEOTIDE SEQUENCE [LARGE SCALE GENOMIC DNA]</scope>
    <source>
        <strain>2308</strain>
    </source>
</reference>
<sequence>MLIRKWKAGLLAGLSILALASSADAGEVRMTVAEYSAKTGPYFEEVKKAFEAENPGITLNFEVVPWDVLLQKLTTDISAGTNADLSIIGTRWLIDFVQQGIAEPLDGYMNDEFKGRFIETFLSPSVLDGKTYGLPIAASARAMYYNKDLFEKAGIKNPPANWDELKADAAKIKALGGENYGFGLQGKEIETDVYYYYAMWSYGTEILNKDGTSGLSTPGALEAAKLYKSMIDDGLTQPGVTSYAREDVQNLFKQGKVGMMITAPFLSNQIKEEAPNLKYGVAAIPAGPTGARGTYGVTDSVIMFQNSKNKEEAWKVLDFLFQKDWRAKFTQNEGFLPVNKEEAKMDYYVNNADLAAFTALLPDARFAPVIPGWEEIADITSNAMQSIYLGKGEPDAVLKDAAAKADAILKK</sequence>
<feature type="signal peptide" evidence="1">
    <location>
        <begin position="1"/>
        <end position="25"/>
    </location>
</feature>
<feature type="chain" id="PRO_0000281196" description="Putative binding protein BAB2_0491">
    <location>
        <begin position="26"/>
        <end position="411"/>
    </location>
</feature>
<dbReference type="EMBL" id="AM040265">
    <property type="protein sequence ID" value="CAJ12657.1"/>
    <property type="molecule type" value="Genomic_DNA"/>
</dbReference>
<dbReference type="RefSeq" id="WP_002965896.1">
    <property type="nucleotide sequence ID" value="NZ_KN046823.1"/>
</dbReference>
<dbReference type="SMR" id="Q2YKZ9"/>
<dbReference type="STRING" id="359391.BAB2_0491"/>
<dbReference type="KEGG" id="bmf:BAB2_0491"/>
<dbReference type="PATRIC" id="fig|359391.11.peg.2682"/>
<dbReference type="HOGENOM" id="CLU_031285_10_1_5"/>
<dbReference type="PhylomeDB" id="Q2YKZ9"/>
<dbReference type="Proteomes" id="UP000002719">
    <property type="component" value="Chromosome II"/>
</dbReference>
<dbReference type="GO" id="GO:0055052">
    <property type="term" value="C:ATP-binding cassette (ABC) transporter complex, substrate-binding subunit-containing"/>
    <property type="evidence" value="ECO:0007669"/>
    <property type="project" value="TreeGrafter"/>
</dbReference>
<dbReference type="GO" id="GO:0042597">
    <property type="term" value="C:periplasmic space"/>
    <property type="evidence" value="ECO:0007669"/>
    <property type="project" value="UniProtKB-SubCell"/>
</dbReference>
<dbReference type="GO" id="GO:1901982">
    <property type="term" value="F:maltose binding"/>
    <property type="evidence" value="ECO:0007669"/>
    <property type="project" value="TreeGrafter"/>
</dbReference>
<dbReference type="GO" id="GO:0042956">
    <property type="term" value="P:maltodextrin transmembrane transport"/>
    <property type="evidence" value="ECO:0007669"/>
    <property type="project" value="TreeGrafter"/>
</dbReference>
<dbReference type="GO" id="GO:0015768">
    <property type="term" value="P:maltose transport"/>
    <property type="evidence" value="ECO:0007669"/>
    <property type="project" value="TreeGrafter"/>
</dbReference>
<dbReference type="GO" id="GO:0055085">
    <property type="term" value="P:transmembrane transport"/>
    <property type="evidence" value="ECO:0007669"/>
    <property type="project" value="InterPro"/>
</dbReference>
<dbReference type="CDD" id="cd13585">
    <property type="entry name" value="PBP2_TMBP_like"/>
    <property type="match status" value="1"/>
</dbReference>
<dbReference type="Gene3D" id="3.40.190.10">
    <property type="entry name" value="Periplasmic binding protein-like II"/>
    <property type="match status" value="2"/>
</dbReference>
<dbReference type="InterPro" id="IPR006059">
    <property type="entry name" value="SBP"/>
</dbReference>
<dbReference type="InterPro" id="IPR006061">
    <property type="entry name" value="SBP_1_CS"/>
</dbReference>
<dbReference type="PANTHER" id="PTHR30061">
    <property type="entry name" value="MALTOSE-BINDING PERIPLASMIC PROTEIN"/>
    <property type="match status" value="1"/>
</dbReference>
<dbReference type="PANTHER" id="PTHR30061:SF50">
    <property type="entry name" value="MALTOSE_MALTODEXTRIN-BINDING PERIPLASMIC PROTEIN"/>
    <property type="match status" value="1"/>
</dbReference>
<dbReference type="Pfam" id="PF01547">
    <property type="entry name" value="SBP_bac_1"/>
    <property type="match status" value="1"/>
</dbReference>
<dbReference type="SUPFAM" id="SSF53850">
    <property type="entry name" value="Periplasmic binding protein-like II"/>
    <property type="match status" value="1"/>
</dbReference>
<dbReference type="PROSITE" id="PS01037">
    <property type="entry name" value="SBP_BACTERIAL_1"/>
    <property type="match status" value="1"/>
</dbReference>
<proteinExistence type="inferred from homology"/>